<feature type="signal peptide" evidence="2">
    <location>
        <begin position="1"/>
        <end position="25"/>
    </location>
</feature>
<feature type="propeptide" id="PRO_0000425490" evidence="1">
    <location>
        <begin position="26"/>
        <end position="46"/>
    </location>
</feature>
<feature type="peptide" id="PRO_0000425491" description="Putative neurotoxin 3" evidence="1">
    <location>
        <begin position="47"/>
        <end position="77"/>
    </location>
</feature>
<dbReference type="EMBL" id="JQ757076">
    <property type="protein sequence ID" value="AFM55023.1"/>
    <property type="molecule type" value="mRNA"/>
</dbReference>
<dbReference type="GO" id="GO:0005576">
    <property type="term" value="C:extracellular region"/>
    <property type="evidence" value="ECO:0007669"/>
    <property type="project" value="UniProtKB-SubCell"/>
</dbReference>
<dbReference type="GO" id="GO:0090729">
    <property type="term" value="F:toxin activity"/>
    <property type="evidence" value="ECO:0007669"/>
    <property type="project" value="UniProtKB-KW"/>
</dbReference>
<accession>I6RU51</accession>
<keyword id="KW-1015">Disulfide bond</keyword>
<keyword id="KW-0528">Neurotoxin</keyword>
<keyword id="KW-0964">Secreted</keyword>
<keyword id="KW-0732">Signal</keyword>
<keyword id="KW-0800">Toxin</keyword>
<comment type="subcellular location">
    <subcellularLocation>
        <location evidence="5">Secreted</location>
    </subcellularLocation>
</comment>
<comment type="tissue specificity">
    <text evidence="5">Expressed by the venom gland.</text>
</comment>
<comment type="PTM">
    <text evidence="4">Contains 2 disulfide bonds.</text>
</comment>
<comment type="similarity">
    <text evidence="4">Belongs to the scolopendra neurotoxin 3 family.</text>
</comment>
<protein>
    <recommendedName>
        <fullName evidence="3">Putative neurotoxin 3</fullName>
    </recommendedName>
    <alternativeName>
        <fullName evidence="6">Putative neurotoxin 4</fullName>
    </alternativeName>
</protein>
<name>PNX34_SCOMU</name>
<sequence length="77" mass="8882">MKAFIAILSIAIVLLLIVSIKETSAKDCKQECVKRYTNGDLTNFLKAEYGPERRGGKCYCEFTCHVKFYIYLKHELN</sequence>
<reference key="1">
    <citation type="journal article" date="2012" name="Mol. Cell. Proteomics">
        <title>Chemical punch packed in venoms makes centipedes excellent predators.</title>
        <authorList>
            <person name="Yang S."/>
            <person name="Liu Z."/>
            <person name="Xiao Y."/>
            <person name="Li Y."/>
            <person name="Rong M."/>
            <person name="Liang S."/>
            <person name="Zhang Z."/>
            <person name="Yu H."/>
            <person name="King G.F."/>
            <person name="Lai R."/>
        </authorList>
    </citation>
    <scope>NUCLEOTIDE SEQUENCE [MRNA]</scope>
    <source>
        <tissue>Venom gland</tissue>
    </source>
</reference>
<evidence type="ECO:0000250" key="1">
    <source>
        <dbReference type="UniProtKB" id="I6S3A5"/>
    </source>
</evidence>
<evidence type="ECO:0000255" key="2"/>
<evidence type="ECO:0000303" key="3">
    <source>
    </source>
</evidence>
<evidence type="ECO:0000305" key="4"/>
<evidence type="ECO:0000305" key="5">
    <source>
    </source>
</evidence>
<evidence type="ECO:0000312" key="6">
    <source>
        <dbReference type="EMBL" id="AFM55023.1"/>
    </source>
</evidence>
<organism>
    <name type="scientific">Scolopendra mutilans</name>
    <name type="common">Chinese red-headed centipede</name>
    <name type="synonym">Scolopendra subspinipes mutilans</name>
    <dbReference type="NCBI Taxonomy" id="2836329"/>
    <lineage>
        <taxon>Eukaryota</taxon>
        <taxon>Metazoa</taxon>
        <taxon>Ecdysozoa</taxon>
        <taxon>Arthropoda</taxon>
        <taxon>Myriapoda</taxon>
        <taxon>Chilopoda</taxon>
        <taxon>Pleurostigmophora</taxon>
        <taxon>Scolopendromorpha</taxon>
        <taxon>Scolopendridae</taxon>
        <taxon>Scolopendra</taxon>
    </lineage>
</organism>
<proteinExistence type="inferred from homology"/>